<feature type="chain" id="PRO_0000175387" description="DNA-directed RNA polymerase subunit alpha">
    <location>
        <begin position="1"/>
        <end position="312"/>
    </location>
</feature>
<feature type="region of interest" description="Alpha N-terminal domain (alpha-NTD)" evidence="1">
    <location>
        <begin position="1"/>
        <end position="226"/>
    </location>
</feature>
<feature type="region of interest" description="Alpha C-terminal domain (alpha-CTD)" evidence="1">
    <location>
        <begin position="243"/>
        <end position="312"/>
    </location>
</feature>
<keyword id="KW-0240">DNA-directed RNA polymerase</keyword>
<keyword id="KW-0548">Nucleotidyltransferase</keyword>
<keyword id="KW-0804">Transcription</keyword>
<keyword id="KW-0808">Transferase</keyword>
<organism>
    <name type="scientific">Streptococcus agalactiae serotype III (strain NEM316)</name>
    <dbReference type="NCBI Taxonomy" id="211110"/>
    <lineage>
        <taxon>Bacteria</taxon>
        <taxon>Bacillati</taxon>
        <taxon>Bacillota</taxon>
        <taxon>Bacilli</taxon>
        <taxon>Lactobacillales</taxon>
        <taxon>Streptococcaceae</taxon>
        <taxon>Streptococcus</taxon>
    </lineage>
</organism>
<name>RPOA_STRA3</name>
<dbReference type="EC" id="2.7.7.6" evidence="1"/>
<dbReference type="EMBL" id="AL766843">
    <property type="protein sequence ID" value="CAD45729.1"/>
    <property type="molecule type" value="Genomic_DNA"/>
</dbReference>
<dbReference type="RefSeq" id="WP_000568977.1">
    <property type="nucleotide sequence ID" value="NC_004368.1"/>
</dbReference>
<dbReference type="SMR" id="Q8CX32"/>
<dbReference type="KEGG" id="san:rpoA"/>
<dbReference type="eggNOG" id="COG0202">
    <property type="taxonomic scope" value="Bacteria"/>
</dbReference>
<dbReference type="HOGENOM" id="CLU_053084_0_1_9"/>
<dbReference type="Proteomes" id="UP000000823">
    <property type="component" value="Chromosome"/>
</dbReference>
<dbReference type="GO" id="GO:0005737">
    <property type="term" value="C:cytoplasm"/>
    <property type="evidence" value="ECO:0007669"/>
    <property type="project" value="UniProtKB-ARBA"/>
</dbReference>
<dbReference type="GO" id="GO:0000428">
    <property type="term" value="C:DNA-directed RNA polymerase complex"/>
    <property type="evidence" value="ECO:0007669"/>
    <property type="project" value="UniProtKB-KW"/>
</dbReference>
<dbReference type="GO" id="GO:0003677">
    <property type="term" value="F:DNA binding"/>
    <property type="evidence" value="ECO:0007669"/>
    <property type="project" value="UniProtKB-UniRule"/>
</dbReference>
<dbReference type="GO" id="GO:0003899">
    <property type="term" value="F:DNA-directed RNA polymerase activity"/>
    <property type="evidence" value="ECO:0007669"/>
    <property type="project" value="UniProtKB-UniRule"/>
</dbReference>
<dbReference type="GO" id="GO:0046983">
    <property type="term" value="F:protein dimerization activity"/>
    <property type="evidence" value="ECO:0007669"/>
    <property type="project" value="InterPro"/>
</dbReference>
<dbReference type="GO" id="GO:0006351">
    <property type="term" value="P:DNA-templated transcription"/>
    <property type="evidence" value="ECO:0007669"/>
    <property type="project" value="UniProtKB-UniRule"/>
</dbReference>
<dbReference type="CDD" id="cd06928">
    <property type="entry name" value="RNAP_alpha_NTD"/>
    <property type="match status" value="1"/>
</dbReference>
<dbReference type="FunFam" id="1.10.150.20:FF:000001">
    <property type="entry name" value="DNA-directed RNA polymerase subunit alpha"/>
    <property type="match status" value="1"/>
</dbReference>
<dbReference type="FunFam" id="2.170.120.12:FF:000001">
    <property type="entry name" value="DNA-directed RNA polymerase subunit alpha"/>
    <property type="match status" value="1"/>
</dbReference>
<dbReference type="Gene3D" id="1.10.150.20">
    <property type="entry name" value="5' to 3' exonuclease, C-terminal subdomain"/>
    <property type="match status" value="1"/>
</dbReference>
<dbReference type="Gene3D" id="2.170.120.12">
    <property type="entry name" value="DNA-directed RNA polymerase, insert domain"/>
    <property type="match status" value="1"/>
</dbReference>
<dbReference type="Gene3D" id="3.30.1360.10">
    <property type="entry name" value="RNA polymerase, RBP11-like subunit"/>
    <property type="match status" value="1"/>
</dbReference>
<dbReference type="HAMAP" id="MF_00059">
    <property type="entry name" value="RNApol_bact_RpoA"/>
    <property type="match status" value="1"/>
</dbReference>
<dbReference type="InterPro" id="IPR011262">
    <property type="entry name" value="DNA-dir_RNA_pol_insert"/>
</dbReference>
<dbReference type="InterPro" id="IPR011263">
    <property type="entry name" value="DNA-dir_RNA_pol_RpoA/D/Rpb3"/>
</dbReference>
<dbReference type="InterPro" id="IPR011773">
    <property type="entry name" value="DNA-dir_RpoA"/>
</dbReference>
<dbReference type="InterPro" id="IPR036603">
    <property type="entry name" value="RBP11-like"/>
</dbReference>
<dbReference type="InterPro" id="IPR011260">
    <property type="entry name" value="RNAP_asu_C"/>
</dbReference>
<dbReference type="InterPro" id="IPR036643">
    <property type="entry name" value="RNApol_insert_sf"/>
</dbReference>
<dbReference type="NCBIfam" id="NF003513">
    <property type="entry name" value="PRK05182.1-2"/>
    <property type="match status" value="1"/>
</dbReference>
<dbReference type="NCBIfam" id="NF003515">
    <property type="entry name" value="PRK05182.2-1"/>
    <property type="match status" value="1"/>
</dbReference>
<dbReference type="NCBIfam" id="NF003518">
    <property type="entry name" value="PRK05182.2-4"/>
    <property type="match status" value="1"/>
</dbReference>
<dbReference type="NCBIfam" id="NF003519">
    <property type="entry name" value="PRK05182.2-5"/>
    <property type="match status" value="1"/>
</dbReference>
<dbReference type="NCBIfam" id="TIGR02027">
    <property type="entry name" value="rpoA"/>
    <property type="match status" value="1"/>
</dbReference>
<dbReference type="Pfam" id="PF01000">
    <property type="entry name" value="RNA_pol_A_bac"/>
    <property type="match status" value="1"/>
</dbReference>
<dbReference type="Pfam" id="PF03118">
    <property type="entry name" value="RNA_pol_A_CTD"/>
    <property type="match status" value="1"/>
</dbReference>
<dbReference type="Pfam" id="PF01193">
    <property type="entry name" value="RNA_pol_L"/>
    <property type="match status" value="1"/>
</dbReference>
<dbReference type="SMART" id="SM00662">
    <property type="entry name" value="RPOLD"/>
    <property type="match status" value="1"/>
</dbReference>
<dbReference type="SUPFAM" id="SSF47789">
    <property type="entry name" value="C-terminal domain of RNA polymerase alpha subunit"/>
    <property type="match status" value="1"/>
</dbReference>
<dbReference type="SUPFAM" id="SSF56553">
    <property type="entry name" value="Insert subdomain of RNA polymerase alpha subunit"/>
    <property type="match status" value="1"/>
</dbReference>
<dbReference type="SUPFAM" id="SSF55257">
    <property type="entry name" value="RBP11-like subunits of RNA polymerase"/>
    <property type="match status" value="1"/>
</dbReference>
<proteinExistence type="inferred from homology"/>
<accession>Q8CX32</accession>
<protein>
    <recommendedName>
        <fullName evidence="1">DNA-directed RNA polymerase subunit alpha</fullName>
        <shortName evidence="1">RNAP subunit alpha</shortName>
        <ecNumber evidence="1">2.7.7.6</ecNumber>
    </recommendedName>
    <alternativeName>
        <fullName evidence="1">RNA polymerase subunit alpha</fullName>
    </alternativeName>
    <alternativeName>
        <fullName evidence="1">Transcriptase subunit alpha</fullName>
    </alternativeName>
</protein>
<sequence>MIEFEKPIITKIDENKDYGRFVIEPLERGYGTTLGNSLRRVLLSSLPGAAVTSIKIDGVLHEFDTIPGVREDVMQIILNVKGLAVKSYVEDEKIIELDVEGPAEITAGDILTDSDIEIVNPDHYLFTIAEGHSLKATMTVAKNRGYVPAEGNKKDDAPVGTLAVDSIYTPVKKVNYQVEPARVGSNDGFDKLTIEIMTNGTIIPEDALGLSARVLIEHLNLFTDLTEVAKATEVMKETEKVNDEKVLDRTIEELDLSVRSYNCLKRAGINTVFDLTEKTEPEMMKVRNLGRKSLEEVKIKLADLGLGLKNDK</sequence>
<evidence type="ECO:0000255" key="1">
    <source>
        <dbReference type="HAMAP-Rule" id="MF_00059"/>
    </source>
</evidence>
<reference key="1">
    <citation type="journal article" date="2002" name="Mol. Microbiol.">
        <title>Genome sequence of Streptococcus agalactiae, a pathogen causing invasive neonatal disease.</title>
        <authorList>
            <person name="Glaser P."/>
            <person name="Rusniok C."/>
            <person name="Buchrieser C."/>
            <person name="Chevalier F."/>
            <person name="Frangeul L."/>
            <person name="Msadek T."/>
            <person name="Zouine M."/>
            <person name="Couve E."/>
            <person name="Lalioui L."/>
            <person name="Poyart C."/>
            <person name="Trieu-Cuot P."/>
            <person name="Kunst F."/>
        </authorList>
    </citation>
    <scope>NUCLEOTIDE SEQUENCE [LARGE SCALE GENOMIC DNA]</scope>
    <source>
        <strain>NEM316</strain>
    </source>
</reference>
<comment type="function">
    <text evidence="1">DNA-dependent RNA polymerase catalyzes the transcription of DNA into RNA using the four ribonucleoside triphosphates as substrates.</text>
</comment>
<comment type="catalytic activity">
    <reaction evidence="1">
        <text>RNA(n) + a ribonucleoside 5'-triphosphate = RNA(n+1) + diphosphate</text>
        <dbReference type="Rhea" id="RHEA:21248"/>
        <dbReference type="Rhea" id="RHEA-COMP:14527"/>
        <dbReference type="Rhea" id="RHEA-COMP:17342"/>
        <dbReference type="ChEBI" id="CHEBI:33019"/>
        <dbReference type="ChEBI" id="CHEBI:61557"/>
        <dbReference type="ChEBI" id="CHEBI:140395"/>
        <dbReference type="EC" id="2.7.7.6"/>
    </reaction>
</comment>
<comment type="subunit">
    <text evidence="1">Homodimer. The RNAP catalytic core consists of 2 alpha, 1 beta, 1 beta' and 1 omega subunit. When a sigma factor is associated with the core the holoenzyme is formed, which can initiate transcription.</text>
</comment>
<comment type="domain">
    <text evidence="1">The N-terminal domain is essential for RNAP assembly and basal transcription, whereas the C-terminal domain is involved in interaction with transcriptional regulators and with upstream promoter elements.</text>
</comment>
<comment type="similarity">
    <text evidence="1">Belongs to the RNA polymerase alpha chain family.</text>
</comment>
<gene>
    <name evidence="1" type="primary">rpoA</name>
    <name type="ordered locus">gbs0084</name>
</gene>